<name>Y2263_ARCFU</name>
<feature type="chain" id="PRO_0000128130" description="Uncharacterized protein AF_2263">
    <location>
        <begin position="1"/>
        <end position="122"/>
    </location>
</feature>
<feature type="coiled-coil region" evidence="1">
    <location>
        <begin position="79"/>
        <end position="114"/>
    </location>
</feature>
<protein>
    <recommendedName>
        <fullName>Uncharacterized protein AF_2263</fullName>
    </recommendedName>
</protein>
<accession>O28021</accession>
<gene>
    <name type="ordered locus">AF_2263</name>
</gene>
<reference key="1">
    <citation type="journal article" date="1997" name="Nature">
        <title>The complete genome sequence of the hyperthermophilic, sulphate-reducing archaeon Archaeoglobus fulgidus.</title>
        <authorList>
            <person name="Klenk H.-P."/>
            <person name="Clayton R.A."/>
            <person name="Tomb J.-F."/>
            <person name="White O."/>
            <person name="Nelson K.E."/>
            <person name="Ketchum K.A."/>
            <person name="Dodson R.J."/>
            <person name="Gwinn M.L."/>
            <person name="Hickey E.K."/>
            <person name="Peterson J.D."/>
            <person name="Richardson D.L."/>
            <person name="Kerlavage A.R."/>
            <person name="Graham D.E."/>
            <person name="Kyrpides N.C."/>
            <person name="Fleischmann R.D."/>
            <person name="Quackenbush J."/>
            <person name="Lee N.H."/>
            <person name="Sutton G.G."/>
            <person name="Gill S.R."/>
            <person name="Kirkness E.F."/>
            <person name="Dougherty B.A."/>
            <person name="McKenney K."/>
            <person name="Adams M.D."/>
            <person name="Loftus B.J."/>
            <person name="Peterson S.N."/>
            <person name="Reich C.I."/>
            <person name="McNeil L.K."/>
            <person name="Badger J.H."/>
            <person name="Glodek A."/>
            <person name="Zhou L."/>
            <person name="Overbeek R."/>
            <person name="Gocayne J.D."/>
            <person name="Weidman J.F."/>
            <person name="McDonald L.A."/>
            <person name="Utterback T.R."/>
            <person name="Cotton M.D."/>
            <person name="Spriggs T."/>
            <person name="Artiach P."/>
            <person name="Kaine B.P."/>
            <person name="Sykes S.M."/>
            <person name="Sadow P.W."/>
            <person name="D'Andrea K.P."/>
            <person name="Bowman C."/>
            <person name="Fujii C."/>
            <person name="Garland S.A."/>
            <person name="Mason T.M."/>
            <person name="Olsen G.J."/>
            <person name="Fraser C.M."/>
            <person name="Smith H.O."/>
            <person name="Woese C.R."/>
            <person name="Venter J.C."/>
        </authorList>
    </citation>
    <scope>NUCLEOTIDE SEQUENCE [LARGE SCALE GENOMIC DNA]</scope>
    <source>
        <strain>ATCC 49558 / DSM 4304 / JCM 9628 / NBRC 100126 / VC-16</strain>
    </source>
</reference>
<evidence type="ECO:0000255" key="1"/>
<organism>
    <name type="scientific">Archaeoglobus fulgidus (strain ATCC 49558 / DSM 4304 / JCM 9628 / NBRC 100126 / VC-16)</name>
    <dbReference type="NCBI Taxonomy" id="224325"/>
    <lineage>
        <taxon>Archaea</taxon>
        <taxon>Methanobacteriati</taxon>
        <taxon>Methanobacteriota</taxon>
        <taxon>Archaeoglobi</taxon>
        <taxon>Archaeoglobales</taxon>
        <taxon>Archaeoglobaceae</taxon>
        <taxon>Archaeoglobus</taxon>
    </lineage>
</organism>
<dbReference type="EMBL" id="AE000782">
    <property type="protein sequence ID" value="AAB88987.1"/>
    <property type="molecule type" value="Genomic_DNA"/>
</dbReference>
<dbReference type="PIR" id="G69532">
    <property type="entry name" value="G69532"/>
</dbReference>
<dbReference type="RefSeq" id="WP_010879752.1">
    <property type="nucleotide sequence ID" value="NC_000917.1"/>
</dbReference>
<dbReference type="SMR" id="O28021"/>
<dbReference type="STRING" id="224325.AF_2263"/>
<dbReference type="PaxDb" id="224325-AF_2263"/>
<dbReference type="EnsemblBacteria" id="AAB88987">
    <property type="protein sequence ID" value="AAB88987"/>
    <property type="gene ID" value="AF_2263"/>
</dbReference>
<dbReference type="KEGG" id="afu:AF_2263"/>
<dbReference type="HOGENOM" id="CLU_2021376_0_0_2"/>
<dbReference type="Proteomes" id="UP000002199">
    <property type="component" value="Chromosome"/>
</dbReference>
<keyword id="KW-0175">Coiled coil</keyword>
<keyword id="KW-1185">Reference proteome</keyword>
<sequence length="122" mass="13824">MFSLKVESEEGFCKIRLFPEHPEFSVGGYGRDDILVFKGAPVSLSAIQKMLEREFGDVIVNFRENSIEIEMQRMDCSLVIEDVASAIKEMMESAAKDLDKIEEVIKESLEKYLRRVGGDNGN</sequence>
<proteinExistence type="predicted"/>